<reference key="1">
    <citation type="journal article" date="2007" name="Nat. Genet.">
        <title>Comparative genomic analysis of three Leishmania species that cause diverse human disease.</title>
        <authorList>
            <person name="Peacock C.S."/>
            <person name="Seeger K."/>
            <person name="Harris D."/>
            <person name="Murphy L."/>
            <person name="Ruiz J.C."/>
            <person name="Quail M.A."/>
            <person name="Peters N."/>
            <person name="Adlem E."/>
            <person name="Tivey A."/>
            <person name="Aslett M."/>
            <person name="Kerhornou A."/>
            <person name="Ivens A."/>
            <person name="Fraser A."/>
            <person name="Rajandream M.-A."/>
            <person name="Carver T."/>
            <person name="Norbertczak H."/>
            <person name="Chillingworth T."/>
            <person name="Hance Z."/>
            <person name="Jagels K."/>
            <person name="Moule S."/>
            <person name="Ormond D."/>
            <person name="Rutter S."/>
            <person name="Sqaures R."/>
            <person name="Whitehead S."/>
            <person name="Rabbinowitsch E."/>
            <person name="Arrowsmith C."/>
            <person name="White B."/>
            <person name="Thurston S."/>
            <person name="Bringaud F."/>
            <person name="Baldauf S.L."/>
            <person name="Faulconbridge A."/>
            <person name="Jeffares D."/>
            <person name="Depledge D.P."/>
            <person name="Oyola S.O."/>
            <person name="Hilley J.D."/>
            <person name="Brito L.O."/>
            <person name="Tosi L.R.O."/>
            <person name="Barrell B."/>
            <person name="Cruz A.K."/>
            <person name="Mottram J.C."/>
            <person name="Smith D.F."/>
            <person name="Berriman M."/>
        </authorList>
    </citation>
    <scope>NUCLEOTIDE SEQUENCE [LARGE SCALE GENOMIC DNA]</scope>
    <source>
        <strain>JPCM5</strain>
    </source>
</reference>
<comment type="function">
    <text evidence="1">Lyase that catalyzes the C1-decarboxylation of 4-hydroxy-3-methoxy-5-(all-trans-polyprenyl)benzoic acid into 2-methoxy-6-(all-trans-polyprenyl)phenol during ubiquinone biosynthesis.</text>
</comment>
<comment type="catalytic activity">
    <reaction evidence="1">
        <text>a 4-hydroxy-3-methoxy-5-(all-trans-polyprenyl)benzoate + H(+) = a 2-methoxy-6-(all-trans-polyprenyl)phenol + CO2</text>
        <dbReference type="Rhea" id="RHEA:81179"/>
        <dbReference type="Rhea" id="RHEA-COMP:9551"/>
        <dbReference type="Rhea" id="RHEA-COMP:10931"/>
        <dbReference type="ChEBI" id="CHEBI:15378"/>
        <dbReference type="ChEBI" id="CHEBI:16526"/>
        <dbReference type="ChEBI" id="CHEBI:62731"/>
        <dbReference type="ChEBI" id="CHEBI:84443"/>
        <dbReference type="EC" id="4.1.1.130"/>
    </reaction>
</comment>
<comment type="cofactor">
    <cofactor evidence="1">
        <name>Zn(2+)</name>
        <dbReference type="ChEBI" id="CHEBI:29105"/>
    </cofactor>
</comment>
<comment type="pathway">
    <text evidence="1">Cofactor biosynthesis; ubiquinone biosynthesis.</text>
</comment>
<comment type="subunit">
    <text evidence="1">Component of a multi-subunit COQ enzyme complex.</text>
</comment>
<comment type="subcellular location">
    <subcellularLocation>
        <location evidence="1">Mitochondrion inner membrane</location>
        <topology evidence="1">Peripheral membrane protein</topology>
        <orientation evidence="1">Matrix side</orientation>
    </subcellularLocation>
</comment>
<comment type="miscellaneous">
    <text evidence="1">This protein may be expected to contain an N-terminal transit peptide but none has been predicted.</text>
</comment>
<comment type="similarity">
    <text evidence="1">Belongs to the COQ4 family.</text>
</comment>
<feature type="chain" id="PRO_0000388084" description="Ubiquinone biosynthesis protein COQ4 homolog, mitochondrial">
    <location>
        <begin position="1"/>
        <end position="187"/>
    </location>
</feature>
<feature type="binding site" evidence="1">
    <location>
        <position position="77"/>
    </location>
    <ligand>
        <name>Zn(2+)</name>
        <dbReference type="ChEBI" id="CHEBI:29105"/>
    </ligand>
</feature>
<feature type="binding site" evidence="1">
    <location>
        <position position="78"/>
    </location>
    <ligand>
        <name>Zn(2+)</name>
        <dbReference type="ChEBI" id="CHEBI:29105"/>
    </ligand>
</feature>
<feature type="binding site" evidence="1">
    <location>
        <position position="81"/>
    </location>
    <ligand>
        <name>Zn(2+)</name>
        <dbReference type="ChEBI" id="CHEBI:29105"/>
    </ligand>
</feature>
<feature type="binding site" evidence="1">
    <location>
        <position position="93"/>
    </location>
    <ligand>
        <name>Zn(2+)</name>
        <dbReference type="ChEBI" id="CHEBI:29105"/>
    </ligand>
</feature>
<name>COQ4_LEIIN</name>
<keyword id="KW-0456">Lyase</keyword>
<keyword id="KW-0472">Membrane</keyword>
<keyword id="KW-0479">Metal-binding</keyword>
<keyword id="KW-0496">Mitochondrion</keyword>
<keyword id="KW-0999">Mitochondrion inner membrane</keyword>
<keyword id="KW-1185">Reference proteome</keyword>
<keyword id="KW-0831">Ubiquinone biosynthesis</keyword>
<keyword id="KW-0862">Zinc</keyword>
<evidence type="ECO:0000255" key="1">
    <source>
        <dbReference type="HAMAP-Rule" id="MF_03111"/>
    </source>
</evidence>
<proteinExistence type="inferred from homology"/>
<dbReference type="EC" id="4.1.1.130" evidence="1"/>
<dbReference type="EMBL" id="FR796441">
    <property type="protein sequence ID" value="CAM65972.1"/>
    <property type="molecule type" value="Genomic_DNA"/>
</dbReference>
<dbReference type="RefSeq" id="XP_001463606.1">
    <property type="nucleotide sequence ID" value="XM_001463569.1"/>
</dbReference>
<dbReference type="SMR" id="A4HU65"/>
<dbReference type="FunCoup" id="A4HU65">
    <property type="interactions" value="187"/>
</dbReference>
<dbReference type="STRING" id="5671.A4HU65"/>
<dbReference type="GeneID" id="5066915"/>
<dbReference type="KEGG" id="lif:LINJ_09_1500"/>
<dbReference type="VEuPathDB" id="TriTrypDB:LINF_090021800"/>
<dbReference type="eggNOG" id="KOG3244">
    <property type="taxonomic scope" value="Eukaryota"/>
</dbReference>
<dbReference type="InParanoid" id="A4HU65"/>
<dbReference type="OMA" id="WFEMINT"/>
<dbReference type="UniPathway" id="UPA00232"/>
<dbReference type="Proteomes" id="UP000008153">
    <property type="component" value="Chromosome 9"/>
</dbReference>
<dbReference type="GO" id="GO:0031314">
    <property type="term" value="C:extrinsic component of mitochondrial inner membrane"/>
    <property type="evidence" value="ECO:0007669"/>
    <property type="project" value="UniProtKB-UniRule"/>
</dbReference>
<dbReference type="GO" id="GO:0006744">
    <property type="term" value="P:ubiquinone biosynthetic process"/>
    <property type="evidence" value="ECO:0007669"/>
    <property type="project" value="UniProtKB-UniRule"/>
</dbReference>
<dbReference type="HAMAP" id="MF_03111">
    <property type="entry name" value="Coq4"/>
    <property type="match status" value="1"/>
</dbReference>
<dbReference type="InterPro" id="IPR007715">
    <property type="entry name" value="Coq4"/>
</dbReference>
<dbReference type="InterPro" id="IPR027540">
    <property type="entry name" value="Coq4_euk"/>
</dbReference>
<dbReference type="PANTHER" id="PTHR12922">
    <property type="entry name" value="UBIQUINONE BIOSYNTHESIS PROTEIN"/>
    <property type="match status" value="1"/>
</dbReference>
<dbReference type="PANTHER" id="PTHR12922:SF7">
    <property type="entry name" value="UBIQUINONE BIOSYNTHESIS PROTEIN COQ4 HOMOLOG, MITOCHONDRIAL"/>
    <property type="match status" value="1"/>
</dbReference>
<dbReference type="Pfam" id="PF05019">
    <property type="entry name" value="Coq4"/>
    <property type="match status" value="1"/>
</dbReference>
<sequence length="187" mass="21357">MKNCMMADQRGRSILKHQPVVGDEALEFSRGLAPSTFGFRYAAYMDRNHFLPSGRTAVKHIADPTLAYVMTRYRQCHDFVHIITGCGRSIEEELAVKIFEWKHTGLPLGLLSLLGGAPRLAAAQWAHMRLYWEWASRNAPCSRHGEPAVPMYLNVPWEDMLAKEYDEVVAYTGITPLPQFLEKRQQH</sequence>
<protein>
    <recommendedName>
        <fullName evidence="1">Ubiquinone biosynthesis protein COQ4 homolog, mitochondrial</fullName>
    </recommendedName>
    <alternativeName>
        <fullName>4-hydroxy-3-methoxy-5-polyprenylbenzoate decarboxylase</fullName>
        <ecNumber evidence="1">4.1.1.130</ecNumber>
    </alternativeName>
    <alternativeName>
        <fullName evidence="1">Coenzyme Q biosynthesis protein 4 homolog</fullName>
    </alternativeName>
</protein>
<organism>
    <name type="scientific">Leishmania infantum</name>
    <dbReference type="NCBI Taxonomy" id="5671"/>
    <lineage>
        <taxon>Eukaryota</taxon>
        <taxon>Discoba</taxon>
        <taxon>Euglenozoa</taxon>
        <taxon>Kinetoplastea</taxon>
        <taxon>Metakinetoplastina</taxon>
        <taxon>Trypanosomatida</taxon>
        <taxon>Trypanosomatidae</taxon>
        <taxon>Leishmaniinae</taxon>
        <taxon>Leishmania</taxon>
    </lineage>
</organism>
<gene>
    <name type="ORF">LinJ09.1490</name>
    <name type="ORF">LinJ_09_1500</name>
</gene>
<accession>A4HU65</accession>